<feature type="chain" id="PRO_0000367475" description="Protein phosphatase 2A scaffold subunit">
    <location>
        <begin position="1"/>
        <end position="584"/>
    </location>
</feature>
<feature type="repeat" description="HEAT 1">
    <location>
        <begin position="7"/>
        <end position="45"/>
    </location>
</feature>
<feature type="repeat" description="HEAT 2">
    <location>
        <begin position="46"/>
        <end position="84"/>
    </location>
</feature>
<feature type="repeat" description="HEAT 3">
    <location>
        <begin position="86"/>
        <end position="123"/>
    </location>
</feature>
<feature type="repeat" description="HEAT 4">
    <location>
        <begin position="168"/>
        <end position="206"/>
    </location>
</feature>
<feature type="repeat" description="HEAT 5">
    <location>
        <begin position="207"/>
        <end position="239"/>
    </location>
</feature>
<feature type="repeat" description="HEAT 6">
    <location>
        <begin position="240"/>
        <end position="278"/>
    </location>
</feature>
<feature type="repeat" description="HEAT 7">
    <location>
        <begin position="279"/>
        <end position="317"/>
    </location>
</feature>
<feature type="repeat" description="HEAT 8">
    <location>
        <begin position="318"/>
        <end position="356"/>
    </location>
</feature>
<feature type="repeat" description="HEAT 9">
    <location>
        <begin position="358"/>
        <end position="395"/>
    </location>
</feature>
<feature type="repeat" description="HEAT 10">
    <location>
        <begin position="397"/>
        <end position="434"/>
    </location>
</feature>
<feature type="repeat" description="HEAT 11">
    <location>
        <begin position="441"/>
        <end position="479"/>
    </location>
</feature>
<feature type="repeat" description="HEAT 12">
    <location>
        <begin position="480"/>
        <end position="512"/>
    </location>
</feature>
<feature type="repeat" description="HEAT 13">
    <location>
        <begin position="513"/>
        <end position="551"/>
    </location>
</feature>
<feature type="repeat" description="HEAT 14">
    <location>
        <begin position="553"/>
        <end position="584"/>
    </location>
</feature>
<feature type="sequence conflict" description="In Ref. 1; AAB03670." evidence="3" ref="1">
    <original>L</original>
    <variation>F</variation>
    <location>
        <position position="494"/>
    </location>
</feature>
<feature type="sequence conflict" description="In Ref. 1; AAB03670." evidence="3" ref="1">
    <original>S</original>
    <variation>F</variation>
    <location>
        <position position="516"/>
    </location>
</feature>
<accession>Q54QR9</accession>
<accession>Q23922</accession>
<keyword id="KW-1003">Cell membrane</keyword>
<keyword id="KW-0963">Cytoplasm</keyword>
<keyword id="KW-0472">Membrane</keyword>
<keyword id="KW-1185">Reference proteome</keyword>
<keyword id="KW-0677">Repeat</keyword>
<sequence length="584" mass="65076">MASINTESDDYHPIVILIDELKNEDIQLRLNSIKKLQSIAKALGPERTRTELIPYLQDSVLEDEDEVLVVLSEELGNLIEFVGGAEHAVCLLPPLQILAGAEELVVREKAVESLCKIAKEIPTSSFEESFLPLLFSLSKADWFTSRTSACGLFTVSYPRANAEMKKSLRKTFGGLCHDDTPMVKRAAATNLGSFAKQIEKESVKSEILPLFQSLSTDEQDSVRLLGVENCALLGSMLTNEENIQFILPTIKASSLDKSWRVRYMVARLLKELCESMGTEITKTELIGAFVKLLKDTEAEVRTEASLRIADVCSLLTKEMNIKTILPCVKDLVSDSSQHVRAALAQVIMSLAPIYGKEDTLTHLLELFLHLLKDDFPDVRLNIISKLDQVSKVIGIEMLSQSLLPAIVELAEDHQWRVRLAIIDYIPLLASQLGVEFFDEKLGNLCMTWLGDPVFSIREAATNNLKKLTEVFGVDWAKNNIIPKVLSLHSHPNYLYRMTTLFSISTLSTVVGGDVISSSMVPLLAKMVSDKVPNIRFNVAKTFQTIIPLLDSTIVQSRVKPLLVKLHEDTDKDVKFYASQALQLC</sequence>
<reference key="1">
    <citation type="submission" date="1996-06" db="EMBL/GenBank/DDBJ databases">
        <authorList>
            <person name="Loomis W.F."/>
        </authorList>
    </citation>
    <scope>NUCLEOTIDE SEQUENCE [MRNA]</scope>
    <source>
        <strain>AX4</strain>
    </source>
</reference>
<reference key="2">
    <citation type="journal article" date="2005" name="Nature">
        <title>The genome of the social amoeba Dictyostelium discoideum.</title>
        <authorList>
            <person name="Eichinger L."/>
            <person name="Pachebat J.A."/>
            <person name="Gloeckner G."/>
            <person name="Rajandream M.A."/>
            <person name="Sucgang R."/>
            <person name="Berriman M."/>
            <person name="Song J."/>
            <person name="Olsen R."/>
            <person name="Szafranski K."/>
            <person name="Xu Q."/>
            <person name="Tunggal B."/>
            <person name="Kummerfeld S."/>
            <person name="Madera M."/>
            <person name="Konfortov B.A."/>
            <person name="Rivero F."/>
            <person name="Bankier A.T."/>
            <person name="Lehmann R."/>
            <person name="Hamlin N."/>
            <person name="Davies R."/>
            <person name="Gaudet P."/>
            <person name="Fey P."/>
            <person name="Pilcher K."/>
            <person name="Chen G."/>
            <person name="Saunders D."/>
            <person name="Sodergren E.J."/>
            <person name="Davis P."/>
            <person name="Kerhornou A."/>
            <person name="Nie X."/>
            <person name="Hall N."/>
            <person name="Anjard C."/>
            <person name="Hemphill L."/>
            <person name="Bason N."/>
            <person name="Farbrother P."/>
            <person name="Desany B."/>
            <person name="Just E."/>
            <person name="Morio T."/>
            <person name="Rost R."/>
            <person name="Churcher C.M."/>
            <person name="Cooper J."/>
            <person name="Haydock S."/>
            <person name="van Driessche N."/>
            <person name="Cronin A."/>
            <person name="Goodhead I."/>
            <person name="Muzny D.M."/>
            <person name="Mourier T."/>
            <person name="Pain A."/>
            <person name="Lu M."/>
            <person name="Harper D."/>
            <person name="Lindsay R."/>
            <person name="Hauser H."/>
            <person name="James K.D."/>
            <person name="Quiles M."/>
            <person name="Madan Babu M."/>
            <person name="Saito T."/>
            <person name="Buchrieser C."/>
            <person name="Wardroper A."/>
            <person name="Felder M."/>
            <person name="Thangavelu M."/>
            <person name="Johnson D."/>
            <person name="Knights A."/>
            <person name="Loulseged H."/>
            <person name="Mungall K.L."/>
            <person name="Oliver K."/>
            <person name="Price C."/>
            <person name="Quail M.A."/>
            <person name="Urushihara H."/>
            <person name="Hernandez J."/>
            <person name="Rabbinowitsch E."/>
            <person name="Steffen D."/>
            <person name="Sanders M."/>
            <person name="Ma J."/>
            <person name="Kohara Y."/>
            <person name="Sharp S."/>
            <person name="Simmonds M.N."/>
            <person name="Spiegler S."/>
            <person name="Tivey A."/>
            <person name="Sugano S."/>
            <person name="White B."/>
            <person name="Walker D."/>
            <person name="Woodward J.R."/>
            <person name="Winckler T."/>
            <person name="Tanaka Y."/>
            <person name="Shaulsky G."/>
            <person name="Schleicher M."/>
            <person name="Weinstock G.M."/>
            <person name="Rosenthal A."/>
            <person name="Cox E.C."/>
            <person name="Chisholm R.L."/>
            <person name="Gibbs R.A."/>
            <person name="Loomis W.F."/>
            <person name="Platzer M."/>
            <person name="Kay R.R."/>
            <person name="Williams J.G."/>
            <person name="Dear P.H."/>
            <person name="Noegel A.A."/>
            <person name="Barrell B.G."/>
            <person name="Kuspa A."/>
        </authorList>
    </citation>
    <scope>NUCLEOTIDE SEQUENCE [LARGE SCALE GENOMIC DNA]</scope>
    <source>
        <strain>AX4</strain>
    </source>
</reference>
<reference key="3">
    <citation type="journal article" date="2008" name="Differentiation">
        <title>The function of PP2A/B56 in non-metazoan multicellular development.</title>
        <authorList>
            <person name="Lee N.-S."/>
            <person name="Veeranki S."/>
            <person name="Kim B."/>
            <person name="Kim L."/>
        </authorList>
    </citation>
    <scope>SUBCELLULAR LOCATION</scope>
</reference>
<reference key="4">
    <citation type="journal article" date="2010" name="Dev. Cell">
        <title>A Ras signaling complex controls the RasC-TORC2 pathway and directed cell migration.</title>
        <authorList>
            <person name="Charest P.G."/>
            <person name="Shen Z."/>
            <person name="Lakoduk A."/>
            <person name="Sasaki A.T."/>
            <person name="Briggs S.P."/>
            <person name="Firtel R.A."/>
        </authorList>
    </citation>
    <scope>IDENTIFICATION IN THE SCA1 COMPLEX</scope>
    <scope>FUNCTION</scope>
</reference>
<evidence type="ECO:0000269" key="1">
    <source>
    </source>
</evidence>
<evidence type="ECO:0000269" key="2">
    <source>
    </source>
</evidence>
<evidence type="ECO:0000305" key="3"/>
<name>2AAA_DICDI</name>
<comment type="function">
    <text evidence="2">Scaffolding molecule which may coordinate the assembly of the catalytic subunit and a variable regulatory B subunit (PubMed:20493808). Component of the Sca1 complex, a regulator of cell motility, chemotaxis and signal relay (PubMed:20493808). The Sca1 complex is recruited to the plasma membrane in a chemoattractant- and F-actin-dependent manner and is enriched at the leading edge of chemotaxing cells where it regulates F-actin dynamics and signal relay by controlling the activation of rasC and the downstream target of rapamycin complex 2 (TORC2)-Akt/protein kinase B (PKB) pathway (PubMed:20493808).</text>
</comment>
<comment type="subunit">
    <text evidence="2">Component of the Sca1 complex composed of at least gefA, gefH, scaA, phr, and the protein phosphatase 2A subunits pppA and pho2B (PubMed:20493808).</text>
</comment>
<comment type="subcellular location">
    <subcellularLocation>
        <location evidence="1">Cytoplasm</location>
        <location evidence="1">Cytosol</location>
    </subcellularLocation>
    <subcellularLocation>
        <location evidence="2">Cell membrane</location>
    </subcellularLocation>
    <text evidence="2">The Sca1 complex is recruited to the plasma membrane in a chemoattractant- and F-actin-dependent manner and is enriched at the leading edge of chemotaxing cells (PubMed:20493808). Membrane localization of the Sca1 complex is regulated by scaA phosphorylation by PKB and PKB-related PKBR1 (PubMed:20493808).</text>
</comment>
<comment type="similarity">
    <text evidence="3">Belongs to the phosphatase 2A regulatory subunit A family.</text>
</comment>
<organism>
    <name type="scientific">Dictyostelium discoideum</name>
    <name type="common">Social amoeba</name>
    <dbReference type="NCBI Taxonomy" id="44689"/>
    <lineage>
        <taxon>Eukaryota</taxon>
        <taxon>Amoebozoa</taxon>
        <taxon>Evosea</taxon>
        <taxon>Eumycetozoa</taxon>
        <taxon>Dictyostelia</taxon>
        <taxon>Dictyosteliales</taxon>
        <taxon>Dictyosteliaceae</taxon>
        <taxon>Dictyostelium</taxon>
    </lineage>
</organism>
<gene>
    <name type="primary">pppA</name>
    <name type="synonym">rcdB</name>
    <name type="synonym">veg124</name>
    <name type="ORF">DDB_G0283601</name>
</gene>
<dbReference type="EMBL" id="U61987">
    <property type="protein sequence ID" value="AAB03670.1"/>
    <property type="molecule type" value="mRNA"/>
</dbReference>
<dbReference type="EMBL" id="AAFI02000056">
    <property type="protein sequence ID" value="EAL65567.1"/>
    <property type="molecule type" value="Genomic_DNA"/>
</dbReference>
<dbReference type="RefSeq" id="XP_638954.1">
    <property type="nucleotide sequence ID" value="XM_633862.1"/>
</dbReference>
<dbReference type="SMR" id="Q54QR9"/>
<dbReference type="STRING" id="44689.Q54QR9"/>
<dbReference type="PaxDb" id="44689-DDB0191258"/>
<dbReference type="EnsemblProtists" id="EAL65567">
    <property type="protein sequence ID" value="EAL65567"/>
    <property type="gene ID" value="DDB_G0283601"/>
</dbReference>
<dbReference type="GeneID" id="8624194"/>
<dbReference type="KEGG" id="ddi:DDB_G0283601"/>
<dbReference type="dictyBase" id="DDB_G0283601">
    <property type="gene designation" value="pppA"/>
</dbReference>
<dbReference type="VEuPathDB" id="AmoebaDB:DDB_G0283601"/>
<dbReference type="eggNOG" id="KOG0211">
    <property type="taxonomic scope" value="Eukaryota"/>
</dbReference>
<dbReference type="HOGENOM" id="CLU_015533_2_1_1"/>
<dbReference type="InParanoid" id="Q54QR9"/>
<dbReference type="OMA" id="NRVEAMQ"/>
<dbReference type="PhylomeDB" id="Q54QR9"/>
<dbReference type="Reactome" id="R-DDI-113501">
    <property type="pathway name" value="Inhibition of replication initiation of damaged DNA by RB1/E2F1"/>
</dbReference>
<dbReference type="Reactome" id="R-DDI-198753">
    <property type="pathway name" value="ERK/MAPK targets"/>
</dbReference>
<dbReference type="Reactome" id="R-DDI-202670">
    <property type="pathway name" value="ERKs are inactivated"/>
</dbReference>
<dbReference type="Reactome" id="R-DDI-389513">
    <property type="pathway name" value="Co-inhibition by CTLA4"/>
</dbReference>
<dbReference type="Reactome" id="R-DDI-6811558">
    <property type="pathway name" value="PI5P, PP2A and IER3 Regulate PI3K/AKT Signaling"/>
</dbReference>
<dbReference type="Reactome" id="R-DDI-69231">
    <property type="pathway name" value="Cyclin D associated events in G1"/>
</dbReference>
<dbReference type="Reactome" id="R-DDI-69273">
    <property type="pathway name" value="Cyclin A/B1/B2 associated events during G2/M transition"/>
</dbReference>
<dbReference type="PRO" id="PR:Q54QR9"/>
<dbReference type="Proteomes" id="UP000002195">
    <property type="component" value="Chromosome 4"/>
</dbReference>
<dbReference type="GO" id="GO:0005737">
    <property type="term" value="C:cytoplasm"/>
    <property type="evidence" value="ECO:0000318"/>
    <property type="project" value="GO_Central"/>
</dbReference>
<dbReference type="GO" id="GO:0005829">
    <property type="term" value="C:cytosol"/>
    <property type="evidence" value="ECO:0000314"/>
    <property type="project" value="dictyBase"/>
</dbReference>
<dbReference type="GO" id="GO:0005886">
    <property type="term" value="C:plasma membrane"/>
    <property type="evidence" value="ECO:0000314"/>
    <property type="project" value="dictyBase"/>
</dbReference>
<dbReference type="GO" id="GO:0000159">
    <property type="term" value="C:protein phosphatase type 2A complex"/>
    <property type="evidence" value="ECO:0000314"/>
    <property type="project" value="dictyBase"/>
</dbReference>
<dbReference type="GO" id="GO:1905742">
    <property type="term" value="C:Ras guanyl-nucleotide exchange factor complex"/>
    <property type="evidence" value="ECO:0000314"/>
    <property type="project" value="dictyBase"/>
</dbReference>
<dbReference type="GO" id="GO:0017018">
    <property type="term" value="F:myosin phosphatase activity"/>
    <property type="evidence" value="ECO:0000314"/>
    <property type="project" value="dictyBase"/>
</dbReference>
<dbReference type="GO" id="GO:0019888">
    <property type="term" value="F:protein phosphatase regulator activity"/>
    <property type="evidence" value="ECO:0000318"/>
    <property type="project" value="GO_Central"/>
</dbReference>
<dbReference type="GO" id="GO:0005198">
    <property type="term" value="F:structural molecule activity"/>
    <property type="evidence" value="ECO:0000314"/>
    <property type="project" value="dictyBase"/>
</dbReference>
<dbReference type="GO" id="GO:0051754">
    <property type="term" value="P:meiotic sister chromatid cohesion, centromeric"/>
    <property type="evidence" value="ECO:0000318"/>
    <property type="project" value="GO_Central"/>
</dbReference>
<dbReference type="GO" id="GO:0031034">
    <property type="term" value="P:myosin filament assembly"/>
    <property type="evidence" value="ECO:0000314"/>
    <property type="project" value="dictyBase"/>
</dbReference>
<dbReference type="GO" id="GO:0051225">
    <property type="term" value="P:spindle assembly"/>
    <property type="evidence" value="ECO:0000318"/>
    <property type="project" value="GO_Central"/>
</dbReference>
<dbReference type="FunFam" id="1.25.10.10:FF:000011">
    <property type="entry name" value="Serine/threonine-protein phosphatase 2A regulatory subunit A alpha isoform"/>
    <property type="match status" value="1"/>
</dbReference>
<dbReference type="Gene3D" id="1.25.10.10">
    <property type="entry name" value="Leucine-rich Repeat Variant"/>
    <property type="match status" value="1"/>
</dbReference>
<dbReference type="InterPro" id="IPR011989">
    <property type="entry name" value="ARM-like"/>
</dbReference>
<dbReference type="InterPro" id="IPR016024">
    <property type="entry name" value="ARM-type_fold"/>
</dbReference>
<dbReference type="InterPro" id="IPR000357">
    <property type="entry name" value="HEAT"/>
</dbReference>
<dbReference type="InterPro" id="IPR021133">
    <property type="entry name" value="HEAT_type_2"/>
</dbReference>
<dbReference type="InterPro" id="IPR054573">
    <property type="entry name" value="PP2A/SF3B1-like_HEAT"/>
</dbReference>
<dbReference type="InterPro" id="IPR051023">
    <property type="entry name" value="PP2A_Regulatory_Subunit_A"/>
</dbReference>
<dbReference type="PANTHER" id="PTHR10648:SF4">
    <property type="entry name" value="PROTEIN PHOSPHATASE 2 (FORMERLY 2A), REGULATORY SUBUNIT A, BETA ISOFORM-RELATED"/>
    <property type="match status" value="1"/>
</dbReference>
<dbReference type="PANTHER" id="PTHR10648">
    <property type="entry name" value="SERINE/THREONINE-PROTEIN PHOSPHATASE PP2A 65 KDA REGULATORY SUBUNIT"/>
    <property type="match status" value="1"/>
</dbReference>
<dbReference type="Pfam" id="PF02985">
    <property type="entry name" value="HEAT"/>
    <property type="match status" value="1"/>
</dbReference>
<dbReference type="Pfam" id="PF22646">
    <property type="entry name" value="PPP2R1A-like_HEAT"/>
    <property type="match status" value="1"/>
</dbReference>
<dbReference type="SUPFAM" id="SSF48371">
    <property type="entry name" value="ARM repeat"/>
    <property type="match status" value="1"/>
</dbReference>
<dbReference type="PROSITE" id="PS50077">
    <property type="entry name" value="HEAT_REPEAT"/>
    <property type="match status" value="11"/>
</dbReference>
<protein>
    <recommendedName>
        <fullName evidence="3">Protein phosphatase 2A scaffold subunit</fullName>
    </recommendedName>
    <alternativeName>
        <fullName evidence="3">Protein phosphatase 2A 65 kDa regulatory subunit</fullName>
    </alternativeName>
    <alternativeName>
        <fullName evidence="3">Protein phosphatase 2A A subunit</fullName>
    </alternativeName>
    <alternativeName>
        <fullName evidence="3">Serine/threonine-protein phosphatase 2A regulatory subunit pppA</fullName>
    </alternativeName>
</protein>
<proteinExistence type="evidence at protein level"/>